<sequence>MEQELNRLGVLAHSATDAQRKRLVENLRDLMISLETIDDTLERIVHTPFEIDGAKIGVNLGIFRTLTQSDASMDAETLAKMTGADPDLLVRLLRYFASARMIAEHGSDSFAANKVTRALASAKGESYVDVFYEMVLPTIHELPNFLERTHYRNPTDRYHLSFQDAFNWEGDLFTFFEADPHRQVLFNRHMQLQRSSITNWGTMATLLATNQSPDAVLLVDIGGGVGHQCERIRANCPNIQGRLILQDLPEVMKNALPIPGVEAMAHNVFEPQPIKGAKFYYLRGVLHDFPDDQCKEILRGIVGAMGVDSTLVIDEMILPDRNINWQATVMDLQMMANFGSQERTRSHWVRLIESTGLMLRDVLYHGLDEYQGLIIAVKTM</sequence>
<organism>
    <name type="scientific">Aspergillus ustus</name>
    <dbReference type="NCBI Taxonomy" id="40382"/>
    <lineage>
        <taxon>Eukaryota</taxon>
        <taxon>Fungi</taxon>
        <taxon>Dikarya</taxon>
        <taxon>Ascomycota</taxon>
        <taxon>Pezizomycotina</taxon>
        <taxon>Eurotiomycetes</taxon>
        <taxon>Eurotiomycetidae</taxon>
        <taxon>Eurotiales</taxon>
        <taxon>Aspergillaceae</taxon>
        <taxon>Aspergillus</taxon>
        <taxon>Aspergillus subgen. Nidulantes</taxon>
    </lineage>
</organism>
<accession>A0A0C1E5A5</accession>
<keyword id="KW-0489">Methyltransferase</keyword>
<keyword id="KW-1185">Reference proteome</keyword>
<keyword id="KW-0949">S-adenosyl-L-methionine</keyword>
<keyword id="KW-0808">Transferase</keyword>
<evidence type="ECO:0000250" key="1">
    <source>
        <dbReference type="UniProtKB" id="O04385"/>
    </source>
</evidence>
<evidence type="ECO:0000255" key="2">
    <source>
        <dbReference type="PROSITE-ProRule" id="PRU01020"/>
    </source>
</evidence>
<evidence type="ECO:0000269" key="3">
    <source>
    </source>
</evidence>
<evidence type="ECO:0000303" key="4">
    <source>
    </source>
</evidence>
<evidence type="ECO:0000305" key="5"/>
<feature type="chain" id="PRO_0000460397" description="O-methyltransferase ucdC">
    <location>
        <begin position="1"/>
        <end position="380"/>
    </location>
</feature>
<feature type="active site" description="Proton acceptor" evidence="2">
    <location>
        <position position="287"/>
    </location>
</feature>
<feature type="binding site" evidence="1">
    <location>
        <begin position="222"/>
        <end position="223"/>
    </location>
    <ligand>
        <name>S-adenosyl-L-methionine</name>
        <dbReference type="ChEBI" id="CHEBI:59789"/>
    </ligand>
</feature>
<feature type="binding site" evidence="1">
    <location>
        <position position="247"/>
    </location>
    <ligand>
        <name>S-adenosyl-L-methionine</name>
        <dbReference type="ChEBI" id="CHEBI:59789"/>
    </ligand>
</feature>
<feature type="binding site" evidence="1">
    <location>
        <position position="283"/>
    </location>
    <ligand>
        <name>S-adenosyl-L-methionine</name>
        <dbReference type="ChEBI" id="CHEBI:59789"/>
    </ligand>
</feature>
<proteinExistence type="evidence at protein level"/>
<reference key="1">
    <citation type="submission" date="2014-11" db="EMBL/GenBank/DDBJ databases">
        <title>Genomics derived discovery of secondary metabolites biosynthetic gene clusters in Aspergillus ustus.</title>
        <authorList>
            <person name="Pi B."/>
            <person name="Dai F."/>
            <person name="Song X."/>
            <person name="Zhu C."/>
            <person name="Li H."/>
            <person name="Yu D."/>
        </authorList>
    </citation>
    <scope>NUCLEOTIDE SEQUENCE [LARGE SCALE GENOMIC DNA]</scope>
    <source>
        <strain>3.3904</strain>
    </source>
</reference>
<reference key="2">
    <citation type="journal article" date="2023" name="Org. Lett.">
        <title>Biosynthesis of p-terphenyls in Aspergillus ustus implies enzymatic reductive dehydration and spontaneous dibenzofuran formation.</title>
        <authorList>
            <person name="Janzen D.J."/>
            <person name="Zhou J."/>
            <person name="Li S.M."/>
        </authorList>
    </citation>
    <scope>FUNCTION</scope>
    <scope>CATALYTIC ACTIVITY</scope>
    <scope>DISRUPTION PHENOTYPE</scope>
    <scope>PATHWAY</scope>
</reference>
<protein>
    <recommendedName>
        <fullName evidence="4">O-methyltransferase ucdC</fullName>
        <ecNumber evidence="3">2.1.1.-</ecNumber>
    </recommendedName>
    <alternativeName>
        <fullName evidence="4">Uscandidusin biosynthesis cluster protein C</fullName>
    </alternativeName>
</protein>
<gene>
    <name evidence="4" type="primary">ucdC</name>
    <name type="ORF">HK57_00187</name>
</gene>
<name>UCDC_ASPUT</name>
<dbReference type="EC" id="2.1.1.-" evidence="3"/>
<dbReference type="EMBL" id="JOMC01000221">
    <property type="protein sequence ID" value="KIA75358.1"/>
    <property type="molecule type" value="Genomic_DNA"/>
</dbReference>
<dbReference type="SMR" id="A0A0C1E5A5"/>
<dbReference type="Proteomes" id="UP000053475">
    <property type="component" value="Unassembled WGS sequence"/>
</dbReference>
<dbReference type="GO" id="GO:0008171">
    <property type="term" value="F:O-methyltransferase activity"/>
    <property type="evidence" value="ECO:0007669"/>
    <property type="project" value="InterPro"/>
</dbReference>
<dbReference type="GO" id="GO:0046983">
    <property type="term" value="F:protein dimerization activity"/>
    <property type="evidence" value="ECO:0007669"/>
    <property type="project" value="InterPro"/>
</dbReference>
<dbReference type="GO" id="GO:0032259">
    <property type="term" value="P:methylation"/>
    <property type="evidence" value="ECO:0007669"/>
    <property type="project" value="UniProtKB-KW"/>
</dbReference>
<dbReference type="GO" id="GO:0044550">
    <property type="term" value="P:secondary metabolite biosynthetic process"/>
    <property type="evidence" value="ECO:0007669"/>
    <property type="project" value="UniProtKB-ARBA"/>
</dbReference>
<dbReference type="Gene3D" id="3.40.50.150">
    <property type="entry name" value="Vaccinia Virus protein VP39"/>
    <property type="match status" value="1"/>
</dbReference>
<dbReference type="Gene3D" id="1.10.10.10">
    <property type="entry name" value="Winged helix-like DNA-binding domain superfamily/Winged helix DNA-binding domain"/>
    <property type="match status" value="1"/>
</dbReference>
<dbReference type="InterPro" id="IPR016461">
    <property type="entry name" value="COMT-like"/>
</dbReference>
<dbReference type="InterPro" id="IPR001077">
    <property type="entry name" value="O_MeTrfase_dom"/>
</dbReference>
<dbReference type="InterPro" id="IPR012967">
    <property type="entry name" value="Plant_O-MeTrfase_dimerisation"/>
</dbReference>
<dbReference type="InterPro" id="IPR029063">
    <property type="entry name" value="SAM-dependent_MTases_sf"/>
</dbReference>
<dbReference type="InterPro" id="IPR036388">
    <property type="entry name" value="WH-like_DNA-bd_sf"/>
</dbReference>
<dbReference type="InterPro" id="IPR036390">
    <property type="entry name" value="WH_DNA-bd_sf"/>
</dbReference>
<dbReference type="PANTHER" id="PTHR43712:SF4">
    <property type="entry name" value="O-METHYLTRANSFERASE DOMAIN-CONTAINING PROTEIN"/>
    <property type="match status" value="1"/>
</dbReference>
<dbReference type="PANTHER" id="PTHR43712">
    <property type="entry name" value="PUTATIVE (AFU_ORTHOLOGUE AFUA_4G14580)-RELATED"/>
    <property type="match status" value="1"/>
</dbReference>
<dbReference type="Pfam" id="PF08100">
    <property type="entry name" value="Dimerisation"/>
    <property type="match status" value="1"/>
</dbReference>
<dbReference type="Pfam" id="PF00891">
    <property type="entry name" value="Methyltransf_2"/>
    <property type="match status" value="1"/>
</dbReference>
<dbReference type="SUPFAM" id="SSF53335">
    <property type="entry name" value="S-adenosyl-L-methionine-dependent methyltransferases"/>
    <property type="match status" value="1"/>
</dbReference>
<dbReference type="SUPFAM" id="SSF46785">
    <property type="entry name" value="Winged helix' DNA-binding domain"/>
    <property type="match status" value="1"/>
</dbReference>
<dbReference type="PROSITE" id="PS51683">
    <property type="entry name" value="SAM_OMT_II"/>
    <property type="match status" value="1"/>
</dbReference>
<comment type="function">
    <text evidence="3">Nonribosomal peptide synthetase that mediates the biosynthesis of usterphenyllins and uscandidusins, p-terphenyl derivatives (PubMed:37607357). Within the pathway, ucdC catalyzes O-methylation of the terphenyl triol intermediate produced by ucdB to yield terphenyllin carrying two methoxy moieties at C-9 and C-12 (PubMed:37607357). The pathway begin with the biosynthesis of 4-hydroxyphenylpyruvate (HPPA) from L-tyrosine, possibly by the aminotransferase ucdG. The nonribosomal peptide synthetase ucdA then condenses two HPPA units to produce atromentin. The key step in this pathway is the reduction and dehydration of atromentin to form a terphenyl triol intermediate, performed by the NAD-dependent dehydrogenase ucdB. Further O-methylation by the methyltransferase ucdC forms terphenyllin carrying two methoxy moieties at C-9 and C-12, and subsequent dihydroxylation at C-3 of ring A and C-15 of ring C by the flavin-dependent oxygenase ucdD leads to 3,15-dihydroxyterphenyllin. Prenylation by ucdE at position C-5 of ring A forms usterphenyllin B, and is followed by a second prenylation at position C-14 of ring C to form usterphenyllin A. The following furan ring formation that leads to uscandidusins A and B was proven to be an unexpected spontaneous non-enzymatic reaction (PubMed:37607357).</text>
</comment>
<comment type="pathway">
    <text evidence="3">Secondary metabolite biosynthesis.</text>
</comment>
<comment type="disruption phenotype">
    <text evidence="3">Impairs the production of usterphenyllins and uscandidusins and leads to the presence of trace amounts of atromentin.</text>
</comment>
<comment type="miscellaneous">
    <text evidence="3">In the absence of ucdC, its substrate, the terphenyl triol intermediate, is unstable and is partially reoxidized to atromentin. Most of the terphenyl triol intermediate is very likely converted to non-detectable products.</text>
</comment>
<comment type="similarity">
    <text evidence="5">Belongs to the class I-like SAM-binding methyltransferase superfamily. Cation-independent O-methyltransferase family. COMT subfamily.</text>
</comment>